<reference key="1">
    <citation type="journal article" date="1990" name="Proc. Natl. Acad. Sci. U.S.A.">
        <title>Conserved enzymes mediate the early reactions of carotenoid biosynthesis in nonphotosynthetic and photosynthetic prokaryotes.</title>
        <authorList>
            <person name="Armstrong G.A."/>
            <person name="Alberti M."/>
            <person name="Hearst J.E."/>
        </authorList>
    </citation>
    <scope>NUCLEOTIDE SEQUENCE [GENOMIC DNA]</scope>
    <source>
        <strain>ATCC 39368 / Eho10</strain>
    </source>
</reference>
<reference key="2">
    <citation type="journal article" date="1992" name="Proc. Natl. Acad. Sci. U.S.A.">
        <title>The crtE gene in Erwinia herbicola encodes geranylgeranyl diphosphate synthase.</title>
        <authorList>
            <person name="Math S.K."/>
            <person name="Hearst J.E."/>
            <person name="Poulter C.D."/>
        </authorList>
    </citation>
    <scope>FUNCTION</scope>
</reference>
<dbReference type="EC" id="2.5.1.-"/>
<dbReference type="EMBL" id="M38423">
    <property type="protein sequence ID" value="AAA24821.1"/>
    <property type="molecule type" value="Genomic_DNA"/>
</dbReference>
<dbReference type="EMBL" id="M87280">
    <property type="protein sequence ID" value="AAA64982.1"/>
    <property type="molecule type" value="Genomic_DNA"/>
</dbReference>
<dbReference type="PIR" id="B39273">
    <property type="entry name" value="B39273"/>
</dbReference>
<dbReference type="RefSeq" id="WP_020503292.1">
    <property type="nucleotide sequence ID" value="NZ_JBBLYX010000006.1"/>
</dbReference>
<dbReference type="SMR" id="P22872"/>
<dbReference type="UniPathway" id="UPA00799"/>
<dbReference type="GO" id="GO:0046905">
    <property type="term" value="F:15-cis-phytoene synthase activity"/>
    <property type="evidence" value="ECO:0000250"/>
    <property type="project" value="UniProtKB"/>
</dbReference>
<dbReference type="GO" id="GO:0004311">
    <property type="term" value="F:geranylgeranyl diphosphate synthase activity"/>
    <property type="evidence" value="ECO:0007669"/>
    <property type="project" value="InterPro"/>
</dbReference>
<dbReference type="GO" id="GO:0046872">
    <property type="term" value="F:metal ion binding"/>
    <property type="evidence" value="ECO:0007669"/>
    <property type="project" value="UniProtKB-KW"/>
</dbReference>
<dbReference type="GO" id="GO:0051996">
    <property type="term" value="F:squalene synthase [NAD(P)H] activity"/>
    <property type="evidence" value="ECO:0007669"/>
    <property type="project" value="InterPro"/>
</dbReference>
<dbReference type="GO" id="GO:0016117">
    <property type="term" value="P:carotenoid biosynthetic process"/>
    <property type="evidence" value="ECO:0000250"/>
    <property type="project" value="UniProtKB"/>
</dbReference>
<dbReference type="CDD" id="cd00683">
    <property type="entry name" value="Trans_IPPS_HH"/>
    <property type="match status" value="1"/>
</dbReference>
<dbReference type="FunFam" id="1.10.600.10:FF:000020">
    <property type="entry name" value="Phytoene synthase"/>
    <property type="match status" value="1"/>
</dbReference>
<dbReference type="Gene3D" id="1.10.600.10">
    <property type="entry name" value="Farnesyl Diphosphate Synthase"/>
    <property type="match status" value="1"/>
</dbReference>
<dbReference type="InterPro" id="IPR008949">
    <property type="entry name" value="Isoprenoid_synthase_dom_sf"/>
</dbReference>
<dbReference type="InterPro" id="IPR053452">
    <property type="entry name" value="Phytoene_synthase-rel"/>
</dbReference>
<dbReference type="InterPro" id="IPR002060">
    <property type="entry name" value="Squ/phyt_synthse"/>
</dbReference>
<dbReference type="InterPro" id="IPR019845">
    <property type="entry name" value="Squalene/phytoene_synthase_CS"/>
</dbReference>
<dbReference type="InterPro" id="IPR044843">
    <property type="entry name" value="Trans_IPPS_bact-type"/>
</dbReference>
<dbReference type="InterPro" id="IPR033904">
    <property type="entry name" value="Trans_IPPS_HH"/>
</dbReference>
<dbReference type="NCBIfam" id="NF042419">
    <property type="entry name" value="Phyto_syn_CrtB"/>
    <property type="match status" value="1"/>
</dbReference>
<dbReference type="PANTHER" id="PTHR31480">
    <property type="entry name" value="BIFUNCTIONAL LYCOPENE CYCLASE/PHYTOENE SYNTHASE"/>
    <property type="match status" value="1"/>
</dbReference>
<dbReference type="Pfam" id="PF00494">
    <property type="entry name" value="SQS_PSY"/>
    <property type="match status" value="1"/>
</dbReference>
<dbReference type="SFLD" id="SFLDG01212">
    <property type="entry name" value="Phytoene_synthase_like"/>
    <property type="match status" value="1"/>
</dbReference>
<dbReference type="SFLD" id="SFLDG01018">
    <property type="entry name" value="Squalene/Phytoene_Synthase_Lik"/>
    <property type="match status" value="1"/>
</dbReference>
<dbReference type="SUPFAM" id="SSF48576">
    <property type="entry name" value="Terpenoid synthases"/>
    <property type="match status" value="1"/>
</dbReference>
<dbReference type="PROSITE" id="PS01044">
    <property type="entry name" value="SQUALEN_PHYTOEN_SYN_1"/>
    <property type="match status" value="1"/>
</dbReference>
<dbReference type="PROSITE" id="PS01045">
    <property type="entry name" value="SQUALEN_PHYTOEN_SYN_2"/>
    <property type="match status" value="1"/>
</dbReference>
<organism>
    <name type="scientific">Pseudescherichia vulneris</name>
    <name type="common">Escherichia vulneris</name>
    <dbReference type="NCBI Taxonomy" id="566"/>
    <lineage>
        <taxon>Bacteria</taxon>
        <taxon>Pseudomonadati</taxon>
        <taxon>Pseudomonadota</taxon>
        <taxon>Gammaproteobacteria</taxon>
        <taxon>Enterobacterales</taxon>
        <taxon>Enterobacteriaceae</taxon>
        <taxon>Pseudescherichia</taxon>
    </lineage>
</organism>
<accession>P22872</accession>
<proteinExistence type="inferred from homology"/>
<feature type="chain" id="PRO_0000067428" description="Phytoene synthase">
    <location>
        <begin position="1"/>
        <end position="309"/>
    </location>
</feature>
<sequence length="309" mass="34123">MSQPPLLDHATQTMANGSKSFATAAKLFDPATRRSVLMLYTWCRHCDDVIDDQTHGFASEAAAEEEATQRLARLRTLTLAAFEGAEMQDPAFAAFQEVALTHGITPRMALDHLDGFAMDVAQTRYVTFEDTLRYCYHVAGVVGLMMARVMGVRDERVLDRACDLGLAFQLTNIARDIIDDAAIDRCYLPAEWLQDAGLTPENYAARENRAALARVAERLIDAAEPYYISSQAGLHDLPPRCAWAIATARSVYREIGIKVKAAGGSAWDRRQHTSKGEKIAMLMAAPGQVIRAKTTRVTPRPAGLWQRPV</sequence>
<keyword id="KW-0125">Carotenoid biosynthesis</keyword>
<keyword id="KW-0460">Magnesium</keyword>
<keyword id="KW-0464">Manganese</keyword>
<keyword id="KW-0479">Metal-binding</keyword>
<keyword id="KW-0808">Transferase</keyword>
<comment type="function">
    <text evidence="3">Involved in the biosynthesis of carotenoids. Catalyzes the condensation of two molecules of geranylgeranyl diphosphate (GGPP) to give prephytoene diphosphate (PPPP) and the subsequent rearrangement of the cyclopropylcarbinyl intermediate to yield phytoene (Probable).</text>
</comment>
<comment type="cofactor">
    <cofactor evidence="1">
        <name>ATP</name>
        <dbReference type="ChEBI" id="CHEBI:30616"/>
    </cofactor>
    <text evidence="1">ATP is required for the transferase activity but it does not seem to be hydrolyzed during the reaction.</text>
</comment>
<comment type="cofactor">
    <cofactor evidence="1">
        <name>Mn(2+)</name>
        <dbReference type="ChEBI" id="CHEBI:29035"/>
    </cofactor>
    <cofactor evidence="1">
        <name>Mg(2+)</name>
        <dbReference type="ChEBI" id="CHEBI:18420"/>
    </cofactor>
</comment>
<comment type="pathway">
    <text>Carotenoid biosynthesis; phytoene biosynthesis.</text>
</comment>
<comment type="similarity">
    <text evidence="2">Belongs to the phytoene/squalene synthase family.</text>
</comment>
<name>CRTB_PSEVU</name>
<gene>
    <name type="primary">crtB</name>
</gene>
<protein>
    <recommendedName>
        <fullName>Phytoene synthase</fullName>
        <shortName>PSase</shortName>
        <ecNumber>2.5.1.-</ecNumber>
    </recommendedName>
</protein>
<evidence type="ECO:0000250" key="1"/>
<evidence type="ECO:0000305" key="2"/>
<evidence type="ECO:0000305" key="3">
    <source>
    </source>
</evidence>